<dbReference type="EC" id="3.-.-.-"/>
<dbReference type="EMBL" id="Z47746">
    <property type="protein sequence ID" value="CAA87677.1"/>
    <property type="molecule type" value="Genomic_DNA"/>
</dbReference>
<dbReference type="EMBL" id="BK006938">
    <property type="protein sequence ID" value="DAA11948.1"/>
    <property type="molecule type" value="Genomic_DNA"/>
</dbReference>
<dbReference type="PIR" id="S51252">
    <property type="entry name" value="S51252"/>
</dbReference>
<dbReference type="RefSeq" id="NP_010386.1">
    <property type="nucleotide sequence ID" value="NM_001180409.1"/>
</dbReference>
<dbReference type="PDB" id="3JCT">
    <property type="method" value="EM"/>
    <property type="resolution" value="3.08 A"/>
    <property type="chains" value="4=1-593"/>
</dbReference>
<dbReference type="PDB" id="4V7F">
    <property type="method" value="EM"/>
    <property type="resolution" value="8.70 A"/>
    <property type="chains" value="l=1-593"/>
</dbReference>
<dbReference type="PDB" id="4V8T">
    <property type="method" value="EM"/>
    <property type="resolution" value="8.10 A"/>
    <property type="chains" value="t=1-593"/>
</dbReference>
<dbReference type="PDB" id="5APN">
    <property type="method" value="EM"/>
    <property type="resolution" value="3.91 A"/>
    <property type="chains" value="x=1-593"/>
</dbReference>
<dbReference type="PDB" id="5APO">
    <property type="method" value="EM"/>
    <property type="resolution" value="3.41 A"/>
    <property type="chains" value="x=1-593"/>
</dbReference>
<dbReference type="PDB" id="5JCS">
    <property type="method" value="EM"/>
    <property type="resolution" value="9.50 A"/>
    <property type="chains" value="u=1-593"/>
</dbReference>
<dbReference type="PDB" id="6FT6">
    <property type="method" value="EM"/>
    <property type="resolution" value="3.90 A"/>
    <property type="chains" value="4=1-593"/>
</dbReference>
<dbReference type="PDB" id="6M62">
    <property type="method" value="EM"/>
    <property type="resolution" value="3.20 A"/>
    <property type="chains" value="4=1-593"/>
</dbReference>
<dbReference type="PDB" id="6RZZ">
    <property type="method" value="EM"/>
    <property type="resolution" value="3.20 A"/>
    <property type="chains" value="r=1-593"/>
</dbReference>
<dbReference type="PDB" id="6YLG">
    <property type="method" value="EM"/>
    <property type="resolution" value="3.00 A"/>
    <property type="chains" value="4=1-593"/>
</dbReference>
<dbReference type="PDB" id="6YLH">
    <property type="method" value="EM"/>
    <property type="resolution" value="3.10 A"/>
    <property type="chains" value="4=1-593"/>
</dbReference>
<dbReference type="PDB" id="7UOO">
    <property type="method" value="EM"/>
    <property type="resolution" value="2.34 A"/>
    <property type="chains" value="4=1-593"/>
</dbReference>
<dbReference type="PDB" id="7UQB">
    <property type="method" value="EM"/>
    <property type="resolution" value="2.43 A"/>
    <property type="chains" value="4=1-593"/>
</dbReference>
<dbReference type="PDB" id="7UQZ">
    <property type="method" value="EM"/>
    <property type="resolution" value="2.44 A"/>
    <property type="chains" value="4=1-592"/>
</dbReference>
<dbReference type="PDB" id="7V08">
    <property type="method" value="EM"/>
    <property type="resolution" value="2.36 A"/>
    <property type="chains" value="4=1-593"/>
</dbReference>
<dbReference type="PDB" id="7Z34">
    <property type="method" value="EM"/>
    <property type="resolution" value="3.80 A"/>
    <property type="chains" value="4=1-593"/>
</dbReference>
<dbReference type="PDB" id="8HFR">
    <property type="method" value="EM"/>
    <property type="resolution" value="2.64 A"/>
    <property type="chains" value="pT=1-593"/>
</dbReference>
<dbReference type="PDBsum" id="3JCT"/>
<dbReference type="PDBsum" id="4V7F"/>
<dbReference type="PDBsum" id="4V8T"/>
<dbReference type="PDBsum" id="5APN"/>
<dbReference type="PDBsum" id="5APO"/>
<dbReference type="PDBsum" id="5JCS"/>
<dbReference type="PDBsum" id="6FT6"/>
<dbReference type="PDBsum" id="6M62"/>
<dbReference type="PDBsum" id="6RZZ"/>
<dbReference type="PDBsum" id="6YLG"/>
<dbReference type="PDBsum" id="6YLH"/>
<dbReference type="PDBsum" id="7UOO"/>
<dbReference type="PDBsum" id="7UQB"/>
<dbReference type="PDBsum" id="7UQZ"/>
<dbReference type="PDBsum" id="7V08"/>
<dbReference type="PDBsum" id="7Z34"/>
<dbReference type="PDBsum" id="8HFR"/>
<dbReference type="EMDB" id="EMD-10068"/>
<dbReference type="EMDB" id="EMD-10838"/>
<dbReference type="EMDB" id="EMD-10839"/>
<dbReference type="EMDB" id="EMD-14471"/>
<dbReference type="EMDB" id="EMD-2169"/>
<dbReference type="EMDB" id="EMD-26651"/>
<dbReference type="EMDB" id="EMD-26686"/>
<dbReference type="EMDB" id="EMD-26703"/>
<dbReference type="EMDB" id="EMD-26941"/>
<dbReference type="EMDB" id="EMD-30108"/>
<dbReference type="EMDB" id="EMD-3151"/>
<dbReference type="EMDB" id="EMD-3152"/>
<dbReference type="EMDB" id="EMD-3153"/>
<dbReference type="EMDB" id="EMD-34725"/>
<dbReference type="EMDB" id="EMD-4302"/>
<dbReference type="SMR" id="Q03862"/>
<dbReference type="BioGRID" id="32159">
    <property type="interactions" value="392"/>
</dbReference>
<dbReference type="DIP" id="DIP-5819N"/>
<dbReference type="FunCoup" id="Q03862">
    <property type="interactions" value="483"/>
</dbReference>
<dbReference type="IntAct" id="Q03862">
    <property type="interactions" value="141"/>
</dbReference>
<dbReference type="MINT" id="Q03862"/>
<dbReference type="STRING" id="4932.YDR101C"/>
<dbReference type="iPTMnet" id="Q03862"/>
<dbReference type="PaxDb" id="4932-YDR101C"/>
<dbReference type="PeptideAtlas" id="Q03862"/>
<dbReference type="EnsemblFungi" id="YDR101C_mRNA">
    <property type="protein sequence ID" value="YDR101C"/>
    <property type="gene ID" value="YDR101C"/>
</dbReference>
<dbReference type="GeneID" id="851678"/>
<dbReference type="KEGG" id="sce:YDR101C"/>
<dbReference type="AGR" id="SGD:S000002508"/>
<dbReference type="SGD" id="S000002508">
    <property type="gene designation" value="ARX1"/>
</dbReference>
<dbReference type="VEuPathDB" id="FungiDB:YDR101C"/>
<dbReference type="eggNOG" id="KOG2776">
    <property type="taxonomic scope" value="Eukaryota"/>
</dbReference>
<dbReference type="HOGENOM" id="CLU_477525_0_0_1"/>
<dbReference type="InParanoid" id="Q03862"/>
<dbReference type="OMA" id="KPSWVHS"/>
<dbReference type="OrthoDB" id="5876363at2759"/>
<dbReference type="BioCyc" id="YEAST:G3O-29704-MONOMER"/>
<dbReference type="Reactome" id="R-SCE-6798695">
    <property type="pathway name" value="Neutrophil degranulation"/>
</dbReference>
<dbReference type="BioGRID-ORCS" id="851678">
    <property type="hits" value="2 hits in 10 CRISPR screens"/>
</dbReference>
<dbReference type="PRO" id="PR:Q03862"/>
<dbReference type="Proteomes" id="UP000002311">
    <property type="component" value="Chromosome IV"/>
</dbReference>
<dbReference type="RNAct" id="Q03862">
    <property type="molecule type" value="protein"/>
</dbReference>
<dbReference type="GO" id="GO:0005737">
    <property type="term" value="C:cytoplasm"/>
    <property type="evidence" value="ECO:0000314"/>
    <property type="project" value="SGD"/>
</dbReference>
<dbReference type="GO" id="GO:0005730">
    <property type="term" value="C:nucleolus"/>
    <property type="evidence" value="ECO:0000314"/>
    <property type="project" value="SGD"/>
</dbReference>
<dbReference type="GO" id="GO:0005654">
    <property type="term" value="C:nucleoplasm"/>
    <property type="evidence" value="ECO:0000314"/>
    <property type="project" value="SGD"/>
</dbReference>
<dbReference type="GO" id="GO:0005634">
    <property type="term" value="C:nucleus"/>
    <property type="evidence" value="ECO:0000314"/>
    <property type="project" value="SGD"/>
</dbReference>
<dbReference type="GO" id="GO:0030687">
    <property type="term" value="C:preribosome, large subunit precursor"/>
    <property type="evidence" value="ECO:0000314"/>
    <property type="project" value="SGD"/>
</dbReference>
<dbReference type="GO" id="GO:0046872">
    <property type="term" value="F:metal ion binding"/>
    <property type="evidence" value="ECO:0007669"/>
    <property type="project" value="UniProtKB-KW"/>
</dbReference>
<dbReference type="GO" id="GO:0008237">
    <property type="term" value="F:metallopeptidase activity"/>
    <property type="evidence" value="ECO:0007669"/>
    <property type="project" value="UniProtKB-KW"/>
</dbReference>
<dbReference type="GO" id="GO:0006508">
    <property type="term" value="P:proteolysis"/>
    <property type="evidence" value="ECO:0007669"/>
    <property type="project" value="UniProtKB-KW"/>
</dbReference>
<dbReference type="GO" id="GO:0000055">
    <property type="term" value="P:ribosomal large subunit export from nucleus"/>
    <property type="evidence" value="ECO:0000315"/>
    <property type="project" value="SGD"/>
</dbReference>
<dbReference type="FunFam" id="3.90.230.10:FF:000024">
    <property type="entry name" value="Probable metalloprotease ARX1"/>
    <property type="match status" value="1"/>
</dbReference>
<dbReference type="Gene3D" id="3.90.230.10">
    <property type="entry name" value="Creatinase/methionine aminopeptidase superfamily"/>
    <property type="match status" value="1"/>
</dbReference>
<dbReference type="Gene3D" id="1.10.10.10">
    <property type="entry name" value="Winged helix-like DNA-binding domain superfamily/Winged helix DNA-binding domain"/>
    <property type="match status" value="1"/>
</dbReference>
<dbReference type="InterPro" id="IPR036005">
    <property type="entry name" value="Creatinase/aminopeptidase-like"/>
</dbReference>
<dbReference type="InterPro" id="IPR047113">
    <property type="entry name" value="PA2G4/ARX1"/>
</dbReference>
<dbReference type="InterPro" id="IPR036388">
    <property type="entry name" value="WH-like_DNA-bd_sf"/>
</dbReference>
<dbReference type="PANTHER" id="PTHR10804:SF102">
    <property type="entry name" value="METALLOPROTEASE ARX1-RELATED"/>
    <property type="match status" value="1"/>
</dbReference>
<dbReference type="PANTHER" id="PTHR10804">
    <property type="entry name" value="PROTEASE FAMILY M24 METHIONYL AMINOPEPTIDASE, AMINOPEPTIDASE P"/>
    <property type="match status" value="1"/>
</dbReference>
<dbReference type="SUPFAM" id="SSF55920">
    <property type="entry name" value="Creatinase/aminopeptidase"/>
    <property type="match status" value="1"/>
</dbReference>
<name>ARX1_YEAST</name>
<proteinExistence type="evidence at protein level"/>
<accession>Q03862</accession>
<accession>D6VS88</accession>
<sequence>MALAISHEDTQILLKDKNILQESVLNKYRTAGQIAQTALKYVTSLINDSYHSKTTQRQLTVPELCLLTDSFILTRLEQYYKNKVNERGIAIPTTIDIDQISGGWCPEIDDTQNLLNWNKGKDSTFASSVTGTLRPGDLVKITLGVHIDGYTSEVSHTMVIYPVDETKPILQPTGPLLGGKADAVAAAHIAMETVVALLACALTPEKLPASLGGTSSGITGQLIRTIVDTIARSYNCGVVPGSRVRRIRRFLAGQNEGIVAEREYKGVVWTESHQEADLLSNTDAKDLTVVDRGQSTPFTNVSAIPSDDFVVQSGEVYLIDLKMASLEHCTKKGLVTLETVDSYTGKSHKAGELIARPGAYVRDFAQTHILKLKTSRQLLTKIDKQGVYPFKLSHLSSNFPFVHENEEELQSLKKDLKSFRLGMSEISNNYLCVESPIQIARWVPWDHILKATNPNGNLSYDATSTLTLPGHELPLPKLGVSAIKLKSLMNSTKESISLPVARECNTIVLCDSSVSTTDRPELLRLTGGSKTCQPSWIHSQHELNPQDSIVQGIFQLATLAKDKRFGLLLKETQPMKQKSVETSNGGVEETMKM</sequence>
<keyword id="KW-0002">3D-structure</keyword>
<keyword id="KW-0963">Cytoplasm</keyword>
<keyword id="KW-0378">Hydrolase</keyword>
<keyword id="KW-0479">Metal-binding</keyword>
<keyword id="KW-0482">Metalloprotease</keyword>
<keyword id="KW-0539">Nucleus</keyword>
<keyword id="KW-0645">Protease</keyword>
<keyword id="KW-1185">Reference proteome</keyword>
<feature type="chain" id="PRO_0000148999" description="Probable metalloprotease ARX1">
    <location>
        <begin position="1"/>
        <end position="593"/>
    </location>
</feature>
<comment type="function">
    <text evidence="1 3">Probable metalloprotease involved in proper assembly of pre-ribosomal particles during the biogenesis of the 60S ribosomal subunit. Accompanies the pre-60S particles to the cytoplasm.</text>
</comment>
<comment type="subunit">
    <text evidence="1 3">Component of the nucleoplasmic and cytoplasmic pre-60S ribosomal particles. Interacts directly with REI1.</text>
</comment>
<comment type="interaction">
    <interactant intactId="EBI-31385">
        <id>Q03862</id>
    </interactant>
    <interactant intactId="EBI-26061">
        <id>P47019</id>
        <label>ALB1</label>
    </interactant>
    <organismsDiffer>false</organismsDiffer>
    <experiments>4</experiments>
</comment>
<comment type="interaction">
    <interactant intactId="EBI-31385">
        <id>Q03862</id>
    </interactant>
    <interactant intactId="EBI-29395">
        <id>Q12080</id>
        <label>NOP53</label>
    </interactant>
    <organismsDiffer>false</organismsDiffer>
    <experiments>4</experiments>
</comment>
<comment type="interaction">
    <interactant intactId="EBI-31385">
        <id>Q03862</id>
    </interactant>
    <interactant intactId="EBI-12114">
        <id>Q01560</id>
        <label>NPL3</label>
    </interactant>
    <organismsDiffer>false</organismsDiffer>
    <experiments>2</experiments>
</comment>
<comment type="interaction">
    <interactant intactId="EBI-31385">
        <id>Q03862</id>
    </interactant>
    <interactant intactId="EBI-21136">
        <id>P38344</id>
        <label>REI1</label>
    </interactant>
    <organismsDiffer>false</organismsDiffer>
    <experiments>6</experiments>
</comment>
<comment type="subcellular location">
    <subcellularLocation>
        <location>Cytoplasm</location>
    </subcellularLocation>
    <subcellularLocation>
        <location>Nucleus</location>
    </subcellularLocation>
</comment>
<comment type="miscellaneous">
    <text evidence="2">Present with 45100 molecules/cell in log phase SD medium.</text>
</comment>
<comment type="similarity">
    <text evidence="4">Belongs to the peptidase M24 family.</text>
</comment>
<gene>
    <name type="primary">ARX1</name>
    <name type="ordered locus">YDR101C</name>
    <name type="ORF">YD8557.10c</name>
</gene>
<organism>
    <name type="scientific">Saccharomyces cerevisiae (strain ATCC 204508 / S288c)</name>
    <name type="common">Baker's yeast</name>
    <dbReference type="NCBI Taxonomy" id="559292"/>
    <lineage>
        <taxon>Eukaryota</taxon>
        <taxon>Fungi</taxon>
        <taxon>Dikarya</taxon>
        <taxon>Ascomycota</taxon>
        <taxon>Saccharomycotina</taxon>
        <taxon>Saccharomycetes</taxon>
        <taxon>Saccharomycetales</taxon>
        <taxon>Saccharomycetaceae</taxon>
        <taxon>Saccharomyces</taxon>
    </lineage>
</organism>
<evidence type="ECO:0000269" key="1">
    <source>
    </source>
</evidence>
<evidence type="ECO:0000269" key="2">
    <source>
    </source>
</evidence>
<evidence type="ECO:0000269" key="3">
    <source>
    </source>
</evidence>
<evidence type="ECO:0000305" key="4"/>
<protein>
    <recommendedName>
        <fullName>Probable metalloprotease ARX1</fullName>
        <ecNumber>3.-.-.-</ecNumber>
    </recommendedName>
    <alternativeName>
        <fullName>Associated with ribosomal export complex protein 1</fullName>
    </alternativeName>
</protein>
<reference key="1">
    <citation type="journal article" date="1997" name="Nature">
        <title>The nucleotide sequence of Saccharomyces cerevisiae chromosome IV.</title>
        <authorList>
            <person name="Jacq C."/>
            <person name="Alt-Moerbe J."/>
            <person name="Andre B."/>
            <person name="Arnold W."/>
            <person name="Bahr A."/>
            <person name="Ballesta J.P.G."/>
            <person name="Bargues M."/>
            <person name="Baron L."/>
            <person name="Becker A."/>
            <person name="Biteau N."/>
            <person name="Bloecker H."/>
            <person name="Blugeon C."/>
            <person name="Boskovic J."/>
            <person name="Brandt P."/>
            <person name="Brueckner M."/>
            <person name="Buitrago M.J."/>
            <person name="Coster F."/>
            <person name="Delaveau T."/>
            <person name="del Rey F."/>
            <person name="Dujon B."/>
            <person name="Eide L.G."/>
            <person name="Garcia-Cantalejo J.M."/>
            <person name="Goffeau A."/>
            <person name="Gomez-Peris A."/>
            <person name="Granotier C."/>
            <person name="Hanemann V."/>
            <person name="Hankeln T."/>
            <person name="Hoheisel J.D."/>
            <person name="Jaeger W."/>
            <person name="Jimenez A."/>
            <person name="Jonniaux J.-L."/>
            <person name="Kraemer C."/>
            <person name="Kuester H."/>
            <person name="Laamanen P."/>
            <person name="Legros Y."/>
            <person name="Louis E.J."/>
            <person name="Moeller-Rieker S."/>
            <person name="Monnet A."/>
            <person name="Moro M."/>
            <person name="Mueller-Auer S."/>
            <person name="Nussbaumer B."/>
            <person name="Paricio N."/>
            <person name="Paulin L."/>
            <person name="Perea J."/>
            <person name="Perez-Alonso M."/>
            <person name="Perez-Ortin J.E."/>
            <person name="Pohl T.M."/>
            <person name="Prydz H."/>
            <person name="Purnelle B."/>
            <person name="Rasmussen S.W."/>
            <person name="Remacha M.A."/>
            <person name="Revuelta J.L."/>
            <person name="Rieger M."/>
            <person name="Salom D."/>
            <person name="Saluz H.P."/>
            <person name="Saiz J.E."/>
            <person name="Saren A.-M."/>
            <person name="Schaefer M."/>
            <person name="Scharfe M."/>
            <person name="Schmidt E.R."/>
            <person name="Schneider C."/>
            <person name="Scholler P."/>
            <person name="Schwarz S."/>
            <person name="Soler-Mira A."/>
            <person name="Urrestarazu L.A."/>
            <person name="Verhasselt P."/>
            <person name="Vissers S."/>
            <person name="Voet M."/>
            <person name="Volckaert G."/>
            <person name="Wagner G."/>
            <person name="Wambutt R."/>
            <person name="Wedler E."/>
            <person name="Wedler H."/>
            <person name="Woelfl S."/>
            <person name="Harris D.E."/>
            <person name="Bowman S."/>
            <person name="Brown D."/>
            <person name="Churcher C.M."/>
            <person name="Connor R."/>
            <person name="Dedman K."/>
            <person name="Gentles S."/>
            <person name="Hamlin N."/>
            <person name="Hunt S."/>
            <person name="Jones L."/>
            <person name="McDonald S."/>
            <person name="Murphy L.D."/>
            <person name="Niblett D."/>
            <person name="Odell C."/>
            <person name="Oliver K."/>
            <person name="Rajandream M.A."/>
            <person name="Richards C."/>
            <person name="Shore L."/>
            <person name="Walsh S.V."/>
            <person name="Barrell B.G."/>
            <person name="Dietrich F.S."/>
            <person name="Mulligan J.T."/>
            <person name="Allen E."/>
            <person name="Araujo R."/>
            <person name="Aviles E."/>
            <person name="Berno A."/>
            <person name="Carpenter J."/>
            <person name="Chen E."/>
            <person name="Cherry J.M."/>
            <person name="Chung E."/>
            <person name="Duncan M."/>
            <person name="Hunicke-Smith S."/>
            <person name="Hyman R.W."/>
            <person name="Komp C."/>
            <person name="Lashkari D."/>
            <person name="Lew H."/>
            <person name="Lin D."/>
            <person name="Mosedale D."/>
            <person name="Nakahara K."/>
            <person name="Namath A."/>
            <person name="Oefner P."/>
            <person name="Oh C."/>
            <person name="Petel F.X."/>
            <person name="Roberts D."/>
            <person name="Schramm S."/>
            <person name="Schroeder M."/>
            <person name="Shogren T."/>
            <person name="Shroff N."/>
            <person name="Winant A."/>
            <person name="Yelton M.A."/>
            <person name="Botstein D."/>
            <person name="Davis R.W."/>
            <person name="Johnston M."/>
            <person name="Andrews S."/>
            <person name="Brinkman R."/>
            <person name="Cooper J."/>
            <person name="Ding H."/>
            <person name="Du Z."/>
            <person name="Favello A."/>
            <person name="Fulton L."/>
            <person name="Gattung S."/>
            <person name="Greco T."/>
            <person name="Hallsworth K."/>
            <person name="Hawkins J."/>
            <person name="Hillier L.W."/>
            <person name="Jier M."/>
            <person name="Johnson D."/>
            <person name="Johnston L."/>
            <person name="Kirsten J."/>
            <person name="Kucaba T."/>
            <person name="Langston Y."/>
            <person name="Latreille P."/>
            <person name="Le T."/>
            <person name="Mardis E."/>
            <person name="Menezes S."/>
            <person name="Miller N."/>
            <person name="Nhan M."/>
            <person name="Pauley A."/>
            <person name="Peluso D."/>
            <person name="Rifkin L."/>
            <person name="Riles L."/>
            <person name="Taich A."/>
            <person name="Trevaskis E."/>
            <person name="Vignati D."/>
            <person name="Wilcox L."/>
            <person name="Wohldman P."/>
            <person name="Vaudin M."/>
            <person name="Wilson R."/>
            <person name="Waterston R."/>
            <person name="Albermann K."/>
            <person name="Hani J."/>
            <person name="Heumann K."/>
            <person name="Kleine K."/>
            <person name="Mewes H.-W."/>
            <person name="Zollner A."/>
            <person name="Zaccaria P."/>
        </authorList>
    </citation>
    <scope>NUCLEOTIDE SEQUENCE [LARGE SCALE GENOMIC DNA]</scope>
    <source>
        <strain>ATCC 204508 / S288c</strain>
    </source>
</reference>
<reference key="2">
    <citation type="journal article" date="2014" name="G3 (Bethesda)">
        <title>The reference genome sequence of Saccharomyces cerevisiae: Then and now.</title>
        <authorList>
            <person name="Engel S.R."/>
            <person name="Dietrich F.S."/>
            <person name="Fisk D.G."/>
            <person name="Binkley G."/>
            <person name="Balakrishnan R."/>
            <person name="Costanzo M.C."/>
            <person name="Dwight S.S."/>
            <person name="Hitz B.C."/>
            <person name="Karra K."/>
            <person name="Nash R.S."/>
            <person name="Weng S."/>
            <person name="Wong E.D."/>
            <person name="Lloyd P."/>
            <person name="Skrzypek M.S."/>
            <person name="Miyasato S.R."/>
            <person name="Simison M."/>
            <person name="Cherry J.M."/>
        </authorList>
    </citation>
    <scope>GENOME REANNOTATION</scope>
    <source>
        <strain>ATCC 204508 / S288c</strain>
    </source>
</reference>
<reference key="3">
    <citation type="journal article" date="2002" name="EMBO J.">
        <title>60S pre-ribosome formation viewed from assembly in the nucleolus until export to the cytoplasm.</title>
        <authorList>
            <person name="Nissan T.A."/>
            <person name="Bassler J."/>
            <person name="Petfalski E."/>
            <person name="Tollervey D."/>
            <person name="Hurt E."/>
        </authorList>
    </citation>
    <scope>FUNCTION</scope>
    <scope>IDENTIFICATION BY MASS SPECTROMETRY</scope>
    <scope>IDENTIFICATION IN THE PRE-60S RIBOSOMAL PARTICLES</scope>
    <scope>SUBCELLULAR LOCATION</scope>
</reference>
<reference key="4">
    <citation type="journal article" date="2003" name="Nature">
        <title>Global analysis of protein localization in budding yeast.</title>
        <authorList>
            <person name="Huh W.-K."/>
            <person name="Falvo J.V."/>
            <person name="Gerke L.C."/>
            <person name="Carroll A.S."/>
            <person name="Howson R.W."/>
            <person name="Weissman J.S."/>
            <person name="O'Shea E.K."/>
        </authorList>
    </citation>
    <scope>SUBCELLULAR LOCATION [LARGE SCALE ANALYSIS]</scope>
</reference>
<reference key="5">
    <citation type="journal article" date="2003" name="Nature">
        <title>Global analysis of protein expression in yeast.</title>
        <authorList>
            <person name="Ghaemmaghami S."/>
            <person name="Huh W.-K."/>
            <person name="Bower K."/>
            <person name="Howson R.W."/>
            <person name="Belle A."/>
            <person name="Dephoure N."/>
            <person name="O'Shea E.K."/>
            <person name="Weissman J.S."/>
        </authorList>
    </citation>
    <scope>LEVEL OF PROTEIN EXPRESSION [LARGE SCALE ANALYSIS]</scope>
</reference>
<reference key="6">
    <citation type="journal article" date="2006" name="Mol. Cell. Biol.">
        <title>Nuclear recycling of the pre-60S ribosomal subunit-associated factor Arx1 depends on Rei1 in Saccharomyces cerevisiae.</title>
        <authorList>
            <person name="Hung N.J."/>
            <person name="Johnson A.W."/>
        </authorList>
    </citation>
    <scope>FUNCTION</scope>
    <scope>INTERACTION WITH REI1</scope>
    <scope>ASSOCIATION WITH PRE-60S PARTICLES</scope>
</reference>